<proteinExistence type="inferred from homology"/>
<accession>B1X6G3</accession>
<gene>
    <name evidence="1" type="primary">rpsQ</name>
    <name type="ordered locus">ECDH10B_3486</name>
</gene>
<dbReference type="EMBL" id="CP000948">
    <property type="protein sequence ID" value="ACB04373.1"/>
    <property type="molecule type" value="Genomic_DNA"/>
</dbReference>
<dbReference type="RefSeq" id="WP_000130100.1">
    <property type="nucleotide sequence ID" value="NC_010473.1"/>
</dbReference>
<dbReference type="SMR" id="B1X6G3"/>
<dbReference type="GeneID" id="93778676"/>
<dbReference type="KEGG" id="ecd:ECDH10B_3486"/>
<dbReference type="HOGENOM" id="CLU_073626_1_1_6"/>
<dbReference type="GO" id="GO:0022627">
    <property type="term" value="C:cytosolic small ribosomal subunit"/>
    <property type="evidence" value="ECO:0007669"/>
    <property type="project" value="TreeGrafter"/>
</dbReference>
<dbReference type="GO" id="GO:0019843">
    <property type="term" value="F:rRNA binding"/>
    <property type="evidence" value="ECO:0007669"/>
    <property type="project" value="UniProtKB-UniRule"/>
</dbReference>
<dbReference type="GO" id="GO:0003735">
    <property type="term" value="F:structural constituent of ribosome"/>
    <property type="evidence" value="ECO:0007669"/>
    <property type="project" value="InterPro"/>
</dbReference>
<dbReference type="GO" id="GO:0006412">
    <property type="term" value="P:translation"/>
    <property type="evidence" value="ECO:0007669"/>
    <property type="project" value="UniProtKB-UniRule"/>
</dbReference>
<dbReference type="CDD" id="cd00364">
    <property type="entry name" value="Ribosomal_uS17"/>
    <property type="match status" value="1"/>
</dbReference>
<dbReference type="FunFam" id="2.40.50.140:FF:000014">
    <property type="entry name" value="30S ribosomal protein S17"/>
    <property type="match status" value="1"/>
</dbReference>
<dbReference type="Gene3D" id="2.40.50.140">
    <property type="entry name" value="Nucleic acid-binding proteins"/>
    <property type="match status" value="1"/>
</dbReference>
<dbReference type="HAMAP" id="MF_01345_B">
    <property type="entry name" value="Ribosomal_uS17_B"/>
    <property type="match status" value="1"/>
</dbReference>
<dbReference type="InterPro" id="IPR012340">
    <property type="entry name" value="NA-bd_OB-fold"/>
</dbReference>
<dbReference type="InterPro" id="IPR000266">
    <property type="entry name" value="Ribosomal_uS17"/>
</dbReference>
<dbReference type="InterPro" id="IPR019984">
    <property type="entry name" value="Ribosomal_uS17_bact/chlr"/>
</dbReference>
<dbReference type="InterPro" id="IPR019979">
    <property type="entry name" value="Ribosomal_uS17_CS"/>
</dbReference>
<dbReference type="NCBIfam" id="NF004123">
    <property type="entry name" value="PRK05610.1"/>
    <property type="match status" value="1"/>
</dbReference>
<dbReference type="NCBIfam" id="TIGR03635">
    <property type="entry name" value="uS17_bact"/>
    <property type="match status" value="1"/>
</dbReference>
<dbReference type="PANTHER" id="PTHR10744">
    <property type="entry name" value="40S RIBOSOMAL PROTEIN S11 FAMILY MEMBER"/>
    <property type="match status" value="1"/>
</dbReference>
<dbReference type="PANTHER" id="PTHR10744:SF1">
    <property type="entry name" value="SMALL RIBOSOMAL SUBUNIT PROTEIN US17M"/>
    <property type="match status" value="1"/>
</dbReference>
<dbReference type="Pfam" id="PF00366">
    <property type="entry name" value="Ribosomal_S17"/>
    <property type="match status" value="1"/>
</dbReference>
<dbReference type="PRINTS" id="PR00973">
    <property type="entry name" value="RIBOSOMALS17"/>
</dbReference>
<dbReference type="SUPFAM" id="SSF50249">
    <property type="entry name" value="Nucleic acid-binding proteins"/>
    <property type="match status" value="1"/>
</dbReference>
<dbReference type="PROSITE" id="PS00056">
    <property type="entry name" value="RIBOSOMAL_S17"/>
    <property type="match status" value="1"/>
</dbReference>
<keyword id="KW-0687">Ribonucleoprotein</keyword>
<keyword id="KW-0689">Ribosomal protein</keyword>
<keyword id="KW-0694">RNA-binding</keyword>
<keyword id="KW-0699">rRNA-binding</keyword>
<protein>
    <recommendedName>
        <fullName evidence="1">Small ribosomal subunit protein uS17</fullName>
    </recommendedName>
    <alternativeName>
        <fullName evidence="2">30S ribosomal protein S17</fullName>
    </alternativeName>
</protein>
<comment type="function">
    <text evidence="1">One of the primary rRNA binding proteins, it binds specifically to the 5'-end of 16S ribosomal RNA.</text>
</comment>
<comment type="subunit">
    <text evidence="1">Part of the 30S ribosomal subunit.</text>
</comment>
<comment type="similarity">
    <text evidence="1">Belongs to the universal ribosomal protein uS17 family.</text>
</comment>
<sequence>MTDKIRTLQGRVVSDKMEKSIVVAIERFVKHPIYGKFIKRTTKLHVHDENNECGIGDVVEIRECRPLSKTKSWTLVRVVEKAVL</sequence>
<reference key="1">
    <citation type="journal article" date="2008" name="J. Bacteriol.">
        <title>The complete genome sequence of Escherichia coli DH10B: insights into the biology of a laboratory workhorse.</title>
        <authorList>
            <person name="Durfee T."/>
            <person name="Nelson R."/>
            <person name="Baldwin S."/>
            <person name="Plunkett G. III"/>
            <person name="Burland V."/>
            <person name="Mau B."/>
            <person name="Petrosino J.F."/>
            <person name="Qin X."/>
            <person name="Muzny D.M."/>
            <person name="Ayele M."/>
            <person name="Gibbs R.A."/>
            <person name="Csorgo B."/>
            <person name="Posfai G."/>
            <person name="Weinstock G.M."/>
            <person name="Blattner F.R."/>
        </authorList>
    </citation>
    <scope>NUCLEOTIDE SEQUENCE [LARGE SCALE GENOMIC DNA]</scope>
    <source>
        <strain>K12 / DH10B</strain>
    </source>
</reference>
<name>RS17_ECODH</name>
<organism>
    <name type="scientific">Escherichia coli (strain K12 / DH10B)</name>
    <dbReference type="NCBI Taxonomy" id="316385"/>
    <lineage>
        <taxon>Bacteria</taxon>
        <taxon>Pseudomonadati</taxon>
        <taxon>Pseudomonadota</taxon>
        <taxon>Gammaproteobacteria</taxon>
        <taxon>Enterobacterales</taxon>
        <taxon>Enterobacteriaceae</taxon>
        <taxon>Escherichia</taxon>
    </lineage>
</organism>
<evidence type="ECO:0000255" key="1">
    <source>
        <dbReference type="HAMAP-Rule" id="MF_01345"/>
    </source>
</evidence>
<evidence type="ECO:0000305" key="2"/>
<feature type="chain" id="PRO_1000143253" description="Small ribosomal subunit protein uS17">
    <location>
        <begin position="1"/>
        <end position="84"/>
    </location>
</feature>